<reference key="1">
    <citation type="submission" date="2006-06" db="EMBL/GenBank/DDBJ databases">
        <title>Complete sequence of Rubrobacter xylanophilus DSM 9941.</title>
        <authorList>
            <consortium name="US DOE Joint Genome Institute"/>
            <person name="Copeland A."/>
            <person name="Lucas S."/>
            <person name="Lapidus A."/>
            <person name="Barry K."/>
            <person name="Detter J.C."/>
            <person name="Glavina del Rio T."/>
            <person name="Hammon N."/>
            <person name="Israni S."/>
            <person name="Dalin E."/>
            <person name="Tice H."/>
            <person name="Pitluck S."/>
            <person name="Munk A.C."/>
            <person name="Brettin T."/>
            <person name="Bruce D."/>
            <person name="Han C."/>
            <person name="Tapia R."/>
            <person name="Gilna P."/>
            <person name="Schmutz J."/>
            <person name="Larimer F."/>
            <person name="Land M."/>
            <person name="Hauser L."/>
            <person name="Kyrpides N."/>
            <person name="Lykidis A."/>
            <person name="da Costa M.S."/>
            <person name="Rainey F.A."/>
            <person name="Empadinhas N."/>
            <person name="Jolivet E."/>
            <person name="Battista J.R."/>
            <person name="Richardson P."/>
        </authorList>
    </citation>
    <scope>NUCLEOTIDE SEQUENCE [LARGE SCALE GENOMIC DNA]</scope>
    <source>
        <strain>DSM 9941 / JCM 11954 / NBRC 16129 / PRD-1</strain>
    </source>
</reference>
<name>ILVC_RUBXD</name>
<dbReference type="EC" id="1.1.1.86" evidence="1"/>
<dbReference type="EMBL" id="CP000386">
    <property type="protein sequence ID" value="ABG06034.1"/>
    <property type="molecule type" value="Genomic_DNA"/>
</dbReference>
<dbReference type="RefSeq" id="WP_011566039.1">
    <property type="nucleotide sequence ID" value="NC_008148.1"/>
</dbReference>
<dbReference type="SMR" id="Q1ARE4"/>
<dbReference type="STRING" id="266117.Rxyl_3127"/>
<dbReference type="KEGG" id="rxy:Rxyl_3127"/>
<dbReference type="eggNOG" id="COG0059">
    <property type="taxonomic scope" value="Bacteria"/>
</dbReference>
<dbReference type="HOGENOM" id="CLU_033821_0_1_11"/>
<dbReference type="OrthoDB" id="9804088at2"/>
<dbReference type="PhylomeDB" id="Q1ARE4"/>
<dbReference type="UniPathway" id="UPA00047">
    <property type="reaction ID" value="UER00056"/>
</dbReference>
<dbReference type="UniPathway" id="UPA00049">
    <property type="reaction ID" value="UER00060"/>
</dbReference>
<dbReference type="Proteomes" id="UP000006637">
    <property type="component" value="Chromosome"/>
</dbReference>
<dbReference type="GO" id="GO:0005829">
    <property type="term" value="C:cytosol"/>
    <property type="evidence" value="ECO:0007669"/>
    <property type="project" value="TreeGrafter"/>
</dbReference>
<dbReference type="GO" id="GO:0004455">
    <property type="term" value="F:ketol-acid reductoisomerase activity"/>
    <property type="evidence" value="ECO:0007669"/>
    <property type="project" value="UniProtKB-UniRule"/>
</dbReference>
<dbReference type="GO" id="GO:0000287">
    <property type="term" value="F:magnesium ion binding"/>
    <property type="evidence" value="ECO:0007669"/>
    <property type="project" value="UniProtKB-UniRule"/>
</dbReference>
<dbReference type="GO" id="GO:0050661">
    <property type="term" value="F:NADP binding"/>
    <property type="evidence" value="ECO:0007669"/>
    <property type="project" value="InterPro"/>
</dbReference>
<dbReference type="GO" id="GO:0009097">
    <property type="term" value="P:isoleucine biosynthetic process"/>
    <property type="evidence" value="ECO:0007669"/>
    <property type="project" value="UniProtKB-UniRule"/>
</dbReference>
<dbReference type="GO" id="GO:0009099">
    <property type="term" value="P:L-valine biosynthetic process"/>
    <property type="evidence" value="ECO:0007669"/>
    <property type="project" value="UniProtKB-UniRule"/>
</dbReference>
<dbReference type="FunFam" id="3.40.50.720:FF:000023">
    <property type="entry name" value="Ketol-acid reductoisomerase (NADP(+))"/>
    <property type="match status" value="1"/>
</dbReference>
<dbReference type="Gene3D" id="6.10.240.10">
    <property type="match status" value="1"/>
</dbReference>
<dbReference type="Gene3D" id="3.40.50.720">
    <property type="entry name" value="NAD(P)-binding Rossmann-like Domain"/>
    <property type="match status" value="1"/>
</dbReference>
<dbReference type="HAMAP" id="MF_00435">
    <property type="entry name" value="IlvC"/>
    <property type="match status" value="1"/>
</dbReference>
<dbReference type="InterPro" id="IPR008927">
    <property type="entry name" value="6-PGluconate_DH-like_C_sf"/>
</dbReference>
<dbReference type="InterPro" id="IPR013023">
    <property type="entry name" value="KARI"/>
</dbReference>
<dbReference type="InterPro" id="IPR000506">
    <property type="entry name" value="KARI_C"/>
</dbReference>
<dbReference type="InterPro" id="IPR013116">
    <property type="entry name" value="KARI_N"/>
</dbReference>
<dbReference type="InterPro" id="IPR014359">
    <property type="entry name" value="KARI_prok"/>
</dbReference>
<dbReference type="InterPro" id="IPR036291">
    <property type="entry name" value="NAD(P)-bd_dom_sf"/>
</dbReference>
<dbReference type="NCBIfam" id="TIGR00465">
    <property type="entry name" value="ilvC"/>
    <property type="match status" value="1"/>
</dbReference>
<dbReference type="NCBIfam" id="NF004017">
    <property type="entry name" value="PRK05479.1"/>
    <property type="match status" value="1"/>
</dbReference>
<dbReference type="NCBIfam" id="NF009940">
    <property type="entry name" value="PRK13403.1"/>
    <property type="match status" value="1"/>
</dbReference>
<dbReference type="PANTHER" id="PTHR21371">
    <property type="entry name" value="KETOL-ACID REDUCTOISOMERASE, MITOCHONDRIAL"/>
    <property type="match status" value="1"/>
</dbReference>
<dbReference type="PANTHER" id="PTHR21371:SF1">
    <property type="entry name" value="KETOL-ACID REDUCTOISOMERASE, MITOCHONDRIAL"/>
    <property type="match status" value="1"/>
</dbReference>
<dbReference type="Pfam" id="PF01450">
    <property type="entry name" value="KARI_C"/>
    <property type="match status" value="1"/>
</dbReference>
<dbReference type="Pfam" id="PF07991">
    <property type="entry name" value="KARI_N"/>
    <property type="match status" value="1"/>
</dbReference>
<dbReference type="PIRSF" id="PIRSF000116">
    <property type="entry name" value="IlvC_gammaproteo"/>
    <property type="match status" value="1"/>
</dbReference>
<dbReference type="SUPFAM" id="SSF48179">
    <property type="entry name" value="6-phosphogluconate dehydrogenase C-terminal domain-like"/>
    <property type="match status" value="1"/>
</dbReference>
<dbReference type="SUPFAM" id="SSF51735">
    <property type="entry name" value="NAD(P)-binding Rossmann-fold domains"/>
    <property type="match status" value="1"/>
</dbReference>
<dbReference type="PROSITE" id="PS51851">
    <property type="entry name" value="KARI_C"/>
    <property type="match status" value="1"/>
</dbReference>
<dbReference type="PROSITE" id="PS51850">
    <property type="entry name" value="KARI_N"/>
    <property type="match status" value="1"/>
</dbReference>
<feature type="chain" id="PRO_0000252784" description="Ketol-acid reductoisomerase (NADP(+))">
    <location>
        <begin position="1"/>
        <end position="341"/>
    </location>
</feature>
<feature type="domain" description="KARI N-terminal Rossmann" evidence="2">
    <location>
        <begin position="1"/>
        <end position="181"/>
    </location>
</feature>
<feature type="domain" description="KARI C-terminal knotted" evidence="3">
    <location>
        <begin position="182"/>
        <end position="327"/>
    </location>
</feature>
<feature type="active site" evidence="1">
    <location>
        <position position="107"/>
    </location>
</feature>
<feature type="binding site" evidence="1">
    <location>
        <begin position="24"/>
        <end position="27"/>
    </location>
    <ligand>
        <name>NADP(+)</name>
        <dbReference type="ChEBI" id="CHEBI:58349"/>
    </ligand>
</feature>
<feature type="binding site" evidence="1">
    <location>
        <position position="50"/>
    </location>
    <ligand>
        <name>NADP(+)</name>
        <dbReference type="ChEBI" id="CHEBI:58349"/>
    </ligand>
</feature>
<feature type="binding site" evidence="1">
    <location>
        <position position="52"/>
    </location>
    <ligand>
        <name>NADP(+)</name>
        <dbReference type="ChEBI" id="CHEBI:58349"/>
    </ligand>
</feature>
<feature type="binding site" evidence="1">
    <location>
        <begin position="82"/>
        <end position="85"/>
    </location>
    <ligand>
        <name>NADP(+)</name>
        <dbReference type="ChEBI" id="CHEBI:58349"/>
    </ligand>
</feature>
<feature type="binding site" evidence="1">
    <location>
        <position position="133"/>
    </location>
    <ligand>
        <name>NADP(+)</name>
        <dbReference type="ChEBI" id="CHEBI:58349"/>
    </ligand>
</feature>
<feature type="binding site" evidence="1">
    <location>
        <position position="190"/>
    </location>
    <ligand>
        <name>Mg(2+)</name>
        <dbReference type="ChEBI" id="CHEBI:18420"/>
        <label>1</label>
    </ligand>
</feature>
<feature type="binding site" evidence="1">
    <location>
        <position position="190"/>
    </location>
    <ligand>
        <name>Mg(2+)</name>
        <dbReference type="ChEBI" id="CHEBI:18420"/>
        <label>2</label>
    </ligand>
</feature>
<feature type="binding site" evidence="1">
    <location>
        <position position="194"/>
    </location>
    <ligand>
        <name>Mg(2+)</name>
        <dbReference type="ChEBI" id="CHEBI:18420"/>
        <label>1</label>
    </ligand>
</feature>
<feature type="binding site" evidence="1">
    <location>
        <position position="226"/>
    </location>
    <ligand>
        <name>Mg(2+)</name>
        <dbReference type="ChEBI" id="CHEBI:18420"/>
        <label>2</label>
    </ligand>
</feature>
<feature type="binding site" evidence="1">
    <location>
        <position position="230"/>
    </location>
    <ligand>
        <name>Mg(2+)</name>
        <dbReference type="ChEBI" id="CHEBI:18420"/>
        <label>2</label>
    </ligand>
</feature>
<feature type="binding site" evidence="1">
    <location>
        <position position="251"/>
    </location>
    <ligand>
        <name>substrate</name>
    </ligand>
</feature>
<organism>
    <name type="scientific">Rubrobacter xylanophilus (strain DSM 9941 / JCM 11954 / NBRC 16129 / PRD-1)</name>
    <dbReference type="NCBI Taxonomy" id="266117"/>
    <lineage>
        <taxon>Bacteria</taxon>
        <taxon>Bacillati</taxon>
        <taxon>Actinomycetota</taxon>
        <taxon>Rubrobacteria</taxon>
        <taxon>Rubrobacterales</taxon>
        <taxon>Rubrobacteraceae</taxon>
        <taxon>Rubrobacter</taxon>
    </lineage>
</organism>
<comment type="function">
    <text evidence="1">Involved in the biosynthesis of branched-chain amino acids (BCAA). Catalyzes an alkyl-migration followed by a ketol-acid reduction of (S)-2-acetolactate (S2AL) to yield (R)-2,3-dihydroxy-isovalerate. In the isomerase reaction, S2AL is rearranged via a Mg-dependent methyl migration to produce 3-hydroxy-3-methyl-2-ketobutyrate (HMKB). In the reductase reaction, this 2-ketoacid undergoes a metal-dependent reduction by NADPH to yield (R)-2,3-dihydroxy-isovalerate.</text>
</comment>
<comment type="catalytic activity">
    <reaction evidence="1">
        <text>(2R)-2,3-dihydroxy-3-methylbutanoate + NADP(+) = (2S)-2-acetolactate + NADPH + H(+)</text>
        <dbReference type="Rhea" id="RHEA:22068"/>
        <dbReference type="ChEBI" id="CHEBI:15378"/>
        <dbReference type="ChEBI" id="CHEBI:49072"/>
        <dbReference type="ChEBI" id="CHEBI:57783"/>
        <dbReference type="ChEBI" id="CHEBI:58349"/>
        <dbReference type="ChEBI" id="CHEBI:58476"/>
        <dbReference type="EC" id="1.1.1.86"/>
    </reaction>
</comment>
<comment type="catalytic activity">
    <reaction evidence="1">
        <text>(2R,3R)-2,3-dihydroxy-3-methylpentanoate + NADP(+) = (S)-2-ethyl-2-hydroxy-3-oxobutanoate + NADPH + H(+)</text>
        <dbReference type="Rhea" id="RHEA:13493"/>
        <dbReference type="ChEBI" id="CHEBI:15378"/>
        <dbReference type="ChEBI" id="CHEBI:49256"/>
        <dbReference type="ChEBI" id="CHEBI:49258"/>
        <dbReference type="ChEBI" id="CHEBI:57783"/>
        <dbReference type="ChEBI" id="CHEBI:58349"/>
        <dbReference type="EC" id="1.1.1.86"/>
    </reaction>
</comment>
<comment type="cofactor">
    <cofactor evidence="1">
        <name>Mg(2+)</name>
        <dbReference type="ChEBI" id="CHEBI:18420"/>
    </cofactor>
    <text evidence="1">Binds 2 magnesium ions per subunit.</text>
</comment>
<comment type="pathway">
    <text evidence="1">Amino-acid biosynthesis; L-isoleucine biosynthesis; L-isoleucine from 2-oxobutanoate: step 2/4.</text>
</comment>
<comment type="pathway">
    <text evidence="1">Amino-acid biosynthesis; L-valine biosynthesis; L-valine from pyruvate: step 2/4.</text>
</comment>
<comment type="similarity">
    <text evidence="1">Belongs to the ketol-acid reductoisomerase family.</text>
</comment>
<accession>Q1ARE4</accession>
<gene>
    <name evidence="1" type="primary">ilvC</name>
    <name type="ordered locus">Rxyl_3127</name>
</gene>
<protein>
    <recommendedName>
        <fullName evidence="1">Ketol-acid reductoisomerase (NADP(+))</fullName>
        <shortName evidence="1">KARI</shortName>
        <ecNumber evidence="1">1.1.1.86</ecNumber>
    </recommendedName>
    <alternativeName>
        <fullName evidence="1">Acetohydroxy-acid isomeroreductase</fullName>
        <shortName evidence="1">AHIR</shortName>
    </alternativeName>
    <alternativeName>
        <fullName evidence="1">Alpha-keto-beta-hydroxylacyl reductoisomerase</fullName>
    </alternativeName>
    <alternativeName>
        <fullName evidence="1">Ketol-acid reductoisomerase type 1</fullName>
    </alternativeName>
    <alternativeName>
        <fullName evidence="1">Ketol-acid reductoisomerase type I</fullName>
    </alternativeName>
</protein>
<keyword id="KW-0028">Amino-acid biosynthesis</keyword>
<keyword id="KW-0100">Branched-chain amino acid biosynthesis</keyword>
<keyword id="KW-0460">Magnesium</keyword>
<keyword id="KW-0479">Metal-binding</keyword>
<keyword id="KW-0521">NADP</keyword>
<keyword id="KW-0560">Oxidoreductase</keyword>
<keyword id="KW-1185">Reference proteome</keyword>
<proteinExistence type="inferred from homology"/>
<sequence length="341" mass="36842">MARVYREGDIGNEIAQKRIAVLGFGSQGHAHALNLRDSGCEVTVGLYRGSASWPKAEEAGLRVAEIPETVRWAEVVMMLLPDERQPPVFREQVAPNLAEGNLMLFAHGFNVHFNQVSVPPEVDLGLVAPKGPGHVLRSLYEEGKGMPALFAVGRDATGQARDLVLSYAKGIGCARAGVLETTFAEETETDLFGEQAVLCGGLSALLKAGFETLVEAGYQPELAYYECVNELKLIVDLIYEGGLARMRYSVSNTAEYGDYTAGPKVIDEGVRERMREILADIQSGRFAKEWVLENQAGGSSFLAMRRREAEHMVEKVGAELRALAAEGAQSPAGSPAGGESR</sequence>
<evidence type="ECO:0000255" key="1">
    <source>
        <dbReference type="HAMAP-Rule" id="MF_00435"/>
    </source>
</evidence>
<evidence type="ECO:0000255" key="2">
    <source>
        <dbReference type="PROSITE-ProRule" id="PRU01197"/>
    </source>
</evidence>
<evidence type="ECO:0000255" key="3">
    <source>
        <dbReference type="PROSITE-ProRule" id="PRU01198"/>
    </source>
</evidence>